<comment type="function">
    <text>May sustain the structure of the postsynaptic density (PSD).</text>
</comment>
<comment type="subunit">
    <text evidence="4">Interacts with DLG4 and DLGAP1 and forms a ternary complex.</text>
</comment>
<comment type="subcellular location">
    <subcellularLocation>
        <location>Cytoplasm</location>
    </subcellularLocation>
    <subcellularLocation>
        <location>Membrane</location>
        <topology>Peripheral membrane protein</topology>
    </subcellularLocation>
</comment>
<comment type="alternative products">
    <event type="alternative splicing"/>
    <isoform>
        <id>O88881-1</id>
        <name>1</name>
        <name>BEGAIN-2</name>
        <sequence type="displayed"/>
    </isoform>
    <isoform>
        <id>O88881-2</id>
        <name>2</name>
        <name>BEGAIN-1</name>
        <sequence type="described" ref="VSP_012584"/>
    </isoform>
</comment>
<comment type="tissue specificity">
    <text evidence="4">Brain-specific. Expressed in neurons and rather enriched at synaptic junctions.</text>
</comment>
<feature type="chain" id="PRO_0000064906" description="Brain-enriched guanylate kinase-associated protein">
    <location>
        <begin position="1"/>
        <end position="611"/>
    </location>
</feature>
<feature type="region of interest" description="Disordered" evidence="3">
    <location>
        <begin position="520"/>
        <end position="611"/>
    </location>
</feature>
<feature type="compositionally biased region" description="Basic and acidic residues" evidence="3">
    <location>
        <begin position="554"/>
        <end position="563"/>
    </location>
</feature>
<feature type="modified residue" description="Phosphotyrosine" evidence="1">
    <location>
        <position position="156"/>
    </location>
</feature>
<feature type="modified residue" description="Phosphoserine" evidence="2">
    <location>
        <position position="219"/>
    </location>
</feature>
<feature type="modified residue" description="Phosphoserine" evidence="1">
    <location>
        <position position="248"/>
    </location>
</feature>
<feature type="modified residue" description="Phosphoserine" evidence="2">
    <location>
        <position position="265"/>
    </location>
</feature>
<feature type="modified residue" description="Phosphothreonine" evidence="1">
    <location>
        <position position="268"/>
    </location>
</feature>
<feature type="modified residue" description="Phosphoserine" evidence="6">
    <location>
        <position position="284"/>
    </location>
</feature>
<feature type="modified residue" description="Phosphoserine" evidence="2">
    <location>
        <position position="364"/>
    </location>
</feature>
<feature type="modified residue" description="Phosphoserine" evidence="2">
    <location>
        <position position="391"/>
    </location>
</feature>
<feature type="modified residue" description="Asymmetric dimethylarginine" evidence="1">
    <location>
        <position position="399"/>
    </location>
</feature>
<feature type="modified residue" description="Phosphoserine" evidence="6">
    <location>
        <position position="474"/>
    </location>
</feature>
<feature type="modified residue" description="Phosphoserine" evidence="6">
    <location>
        <position position="484"/>
    </location>
</feature>
<feature type="modified residue" description="Phosphoserine" evidence="6">
    <location>
        <position position="494"/>
    </location>
</feature>
<feature type="modified residue" description="Phosphoserine" evidence="6">
    <location>
        <position position="496"/>
    </location>
</feature>
<feature type="modified residue" description="Phosphoserine" evidence="2">
    <location>
        <position position="519"/>
    </location>
</feature>
<feature type="modified residue" description="Phosphoserine" evidence="2">
    <location>
        <position position="521"/>
    </location>
</feature>
<feature type="modified residue" description="Phosphoserine" evidence="2">
    <location>
        <position position="525"/>
    </location>
</feature>
<feature type="modified residue" description="Phosphoserine" evidence="2">
    <location>
        <position position="571"/>
    </location>
</feature>
<feature type="modified residue" description="Phosphoserine" evidence="2">
    <location>
        <position position="581"/>
    </location>
</feature>
<feature type="splice variant" id="VSP_012584" description="In isoform 2." evidence="5">
    <original>MWTGGRRPGRLRRA</original>
    <variation>MGSDQSSQ</variation>
    <location>
        <begin position="1"/>
        <end position="14"/>
    </location>
</feature>
<keyword id="KW-0025">Alternative splicing</keyword>
<keyword id="KW-0963">Cytoplasm</keyword>
<keyword id="KW-0472">Membrane</keyword>
<keyword id="KW-0488">Methylation</keyword>
<keyword id="KW-0597">Phosphoprotein</keyword>
<keyword id="KW-1185">Reference proteome</keyword>
<organism>
    <name type="scientific">Rattus norvegicus</name>
    <name type="common">Rat</name>
    <dbReference type="NCBI Taxonomy" id="10116"/>
    <lineage>
        <taxon>Eukaryota</taxon>
        <taxon>Metazoa</taxon>
        <taxon>Chordata</taxon>
        <taxon>Craniata</taxon>
        <taxon>Vertebrata</taxon>
        <taxon>Euteleostomi</taxon>
        <taxon>Mammalia</taxon>
        <taxon>Eutheria</taxon>
        <taxon>Euarchontoglires</taxon>
        <taxon>Glires</taxon>
        <taxon>Rodentia</taxon>
        <taxon>Myomorpha</taxon>
        <taxon>Muroidea</taxon>
        <taxon>Muridae</taxon>
        <taxon>Murinae</taxon>
        <taxon>Rattus</taxon>
    </lineage>
</organism>
<proteinExistence type="evidence at protein level"/>
<sequence>MWTGGRRPGRLRRAASAADMEKLSALQEQKGELRKRLSYTTHKLEKLETEFDSTRHYLEIELRRAQEELDKVTEKLRRIQSNYMALQRINQELEDKLYRMGQHYEEEKRAMSHEIVALNSHLLEAKVTIDKLSEDNELYRKDCNLAAQLLQCSQTYGRVHKVSELPSDFQQRVSLHMEKHGCSLPSPLCHPSYADSVPTCVIAKVLEKPDPGSLSSRMSDASARDLAYRDGVENPGPRPPYKGDIYCSDTALYCPDERDHDRRPSVDTPVTDVGFLRAQNSTDSLAEEEEAEAAAFPEAYRREAFQGYAASLPTSSSYSSFSATSEEKEHAQASTLTASQQAIYLNSREELFSRKPPSATYGSSPRYAKAAATLGSPLEAQVAPGFARTVSPYPAEPYRYPASQQALMPPNLWSLRAKPSGNRLAAREDIRGQWRPLSVEDVGAYSYQAGAAGRAASPCNFSERFYGGGGGGGSPGKNAEGRASPLYASYKADSFSEGDDLSQGHLAEPCFLRAGGDLSLSPSRSADPLPGYATSDGDGDRLGVQLCGPGSSPEPEHGSRDSLEPSSMEASPEMHPPTRLSPQQAFPRTGGSGLSRKDSLTKAQLYGTLLN</sequence>
<reference key="1">
    <citation type="journal article" date="1998" name="J. Biol. Chem.">
        <title>BEGAIN (brain-enriched guanylate kinase-associated protein), a novel neuronal PSD-95/SAP90-binding protein.</title>
        <authorList>
            <person name="Deguchi M."/>
            <person name="Hata Y."/>
            <person name="Takeuchi M."/>
            <person name="Ide N."/>
            <person name="Hirao K."/>
            <person name="Yao I."/>
            <person name="Irie M."/>
            <person name="Toyoda A."/>
            <person name="Takai Y."/>
        </authorList>
    </citation>
    <scope>NUCLEOTIDE SEQUENCE [MRNA] (ISOFORMS 1 AND 2)</scope>
    <scope>TISSUE SPECIFICITY</scope>
    <scope>INTERACTION WITH DLG4 AND DLGAP1</scope>
</reference>
<reference key="2">
    <citation type="journal article" date="2012" name="Nat. Commun.">
        <title>Quantitative maps of protein phosphorylation sites across 14 different rat organs and tissues.</title>
        <authorList>
            <person name="Lundby A."/>
            <person name="Secher A."/>
            <person name="Lage K."/>
            <person name="Nordsborg N.B."/>
            <person name="Dmytriyev A."/>
            <person name="Lundby C."/>
            <person name="Olsen J.V."/>
        </authorList>
    </citation>
    <scope>PHOSPHORYLATION [LARGE SCALE ANALYSIS] AT SER-284; SER-474; SER-484; SER-494 AND SER-496</scope>
    <scope>IDENTIFICATION BY MASS SPECTROMETRY [LARGE SCALE ANALYSIS]</scope>
</reference>
<evidence type="ECO:0000250" key="1">
    <source>
        <dbReference type="UniProtKB" id="Q68EF6"/>
    </source>
</evidence>
<evidence type="ECO:0000250" key="2">
    <source>
        <dbReference type="UniProtKB" id="Q9BUH8"/>
    </source>
</evidence>
<evidence type="ECO:0000256" key="3">
    <source>
        <dbReference type="SAM" id="MobiDB-lite"/>
    </source>
</evidence>
<evidence type="ECO:0000269" key="4">
    <source>
    </source>
</evidence>
<evidence type="ECO:0000303" key="5">
    <source>
    </source>
</evidence>
<evidence type="ECO:0007744" key="6">
    <source>
    </source>
</evidence>
<protein>
    <recommendedName>
        <fullName>Brain-enriched guanylate kinase-associated protein</fullName>
    </recommendedName>
</protein>
<accession>O88881</accession>
<accession>O88882</accession>
<gene>
    <name type="primary">Begain</name>
</gene>
<dbReference type="EMBL" id="AF064868">
    <property type="protein sequence ID" value="AAC63267.1"/>
    <property type="molecule type" value="mRNA"/>
</dbReference>
<dbReference type="EMBL" id="AF064869">
    <property type="protein sequence ID" value="AAC63268.1"/>
    <property type="molecule type" value="mRNA"/>
</dbReference>
<dbReference type="RefSeq" id="NP_001104585.1">
    <molecule id="O88881-2"/>
    <property type="nucleotide sequence ID" value="NM_001111115.1"/>
</dbReference>
<dbReference type="RefSeq" id="NP_077077.1">
    <molecule id="O88881-1"/>
    <property type="nucleotide sequence ID" value="NM_024163.2"/>
</dbReference>
<dbReference type="SMR" id="O88881"/>
<dbReference type="BioGRID" id="249416">
    <property type="interactions" value="1"/>
</dbReference>
<dbReference type="CORUM" id="O88881"/>
<dbReference type="FunCoup" id="O88881">
    <property type="interactions" value="898"/>
</dbReference>
<dbReference type="STRING" id="10116.ENSRNOP00000071412"/>
<dbReference type="iPTMnet" id="O88881"/>
<dbReference type="PhosphoSitePlus" id="O88881"/>
<dbReference type="PaxDb" id="10116-ENSRNOP00000049699"/>
<dbReference type="Ensembl" id="ENSRNOT00000041903.6">
    <molecule id="O88881-2"/>
    <property type="protein sequence ID" value="ENSRNOP00000049699.3"/>
    <property type="gene ID" value="ENSRNOG00000004650.8"/>
</dbReference>
<dbReference type="Ensembl" id="ENSRNOT00000082216.2">
    <molecule id="O88881-1"/>
    <property type="protein sequence ID" value="ENSRNOP00000071412.2"/>
    <property type="gene ID" value="ENSRNOG00000004650.8"/>
</dbReference>
<dbReference type="GeneID" id="79146"/>
<dbReference type="KEGG" id="rno:79146"/>
<dbReference type="UCSC" id="RGD:708347">
    <molecule id="O88881-1"/>
    <property type="organism name" value="rat"/>
</dbReference>
<dbReference type="AGR" id="RGD:708347"/>
<dbReference type="CTD" id="57596"/>
<dbReference type="RGD" id="708347">
    <property type="gene designation" value="Begain"/>
</dbReference>
<dbReference type="eggNOG" id="ENOG502QUGW">
    <property type="taxonomic scope" value="Eukaryota"/>
</dbReference>
<dbReference type="GeneTree" id="ENSGT00940000161760"/>
<dbReference type="HOGENOM" id="CLU_020017_1_1_1"/>
<dbReference type="InParanoid" id="O88881"/>
<dbReference type="PhylomeDB" id="O88881"/>
<dbReference type="TreeFam" id="TF331612"/>
<dbReference type="PRO" id="PR:O88881"/>
<dbReference type="Proteomes" id="UP000002494">
    <property type="component" value="Chromosome 6"/>
</dbReference>
<dbReference type="Bgee" id="ENSRNOG00000004650">
    <property type="expression patterns" value="Expressed in frontal cortex and 18 other cell types or tissues"/>
</dbReference>
<dbReference type="ExpressionAtlas" id="O88881">
    <property type="expression patterns" value="baseline and differential"/>
</dbReference>
<dbReference type="GO" id="GO:0005829">
    <property type="term" value="C:cytosol"/>
    <property type="evidence" value="ECO:0000304"/>
    <property type="project" value="Reactome"/>
</dbReference>
<dbReference type="GO" id="GO:0030425">
    <property type="term" value="C:dendrite"/>
    <property type="evidence" value="ECO:0000314"/>
    <property type="project" value="UniProtKB"/>
</dbReference>
<dbReference type="GO" id="GO:0098978">
    <property type="term" value="C:glutamatergic synapse"/>
    <property type="evidence" value="ECO:0000314"/>
    <property type="project" value="SynGO"/>
</dbReference>
<dbReference type="GO" id="GO:0016020">
    <property type="term" value="C:membrane"/>
    <property type="evidence" value="ECO:0007669"/>
    <property type="project" value="UniProtKB-SubCell"/>
</dbReference>
<dbReference type="GO" id="GO:0043025">
    <property type="term" value="C:neuronal cell body"/>
    <property type="evidence" value="ECO:0000314"/>
    <property type="project" value="RGD"/>
</dbReference>
<dbReference type="GO" id="GO:0005634">
    <property type="term" value="C:nucleus"/>
    <property type="evidence" value="ECO:0000314"/>
    <property type="project" value="UniProtKB"/>
</dbReference>
<dbReference type="GO" id="GO:0098794">
    <property type="term" value="C:postsynapse"/>
    <property type="evidence" value="ECO:0000314"/>
    <property type="project" value="SynGO"/>
</dbReference>
<dbReference type="GO" id="GO:0098793">
    <property type="term" value="C:presynapse"/>
    <property type="evidence" value="ECO:0000266"/>
    <property type="project" value="RGD"/>
</dbReference>
<dbReference type="GO" id="GO:0045202">
    <property type="term" value="C:synapse"/>
    <property type="evidence" value="ECO:0000314"/>
    <property type="project" value="UniProtKB"/>
</dbReference>
<dbReference type="GO" id="GO:0098817">
    <property type="term" value="P:evoked excitatory postsynaptic potential"/>
    <property type="evidence" value="ECO:0000266"/>
    <property type="project" value="RGD"/>
</dbReference>
<dbReference type="InterPro" id="IPR043441">
    <property type="entry name" value="Tjap1/BEGAIN"/>
</dbReference>
<dbReference type="PANTHER" id="PTHR28664:SF2">
    <property type="entry name" value="BRAIN-ENRICHED GUANYLATE KINASE-ASSOCIATED PROTEIN"/>
    <property type="match status" value="1"/>
</dbReference>
<dbReference type="PANTHER" id="PTHR28664">
    <property type="entry name" value="TIGHT JUNCTION-ASSOCIATED PROTEIN 1"/>
    <property type="match status" value="1"/>
</dbReference>
<name>BEGIN_RAT</name>